<evidence type="ECO:0000255" key="1">
    <source>
        <dbReference type="HAMAP-Rule" id="MF_00044"/>
    </source>
</evidence>
<protein>
    <recommendedName>
        <fullName evidence="1">Aspartate--tRNA(Asp/Asn) ligase</fullName>
        <ecNumber evidence="1">6.1.1.23</ecNumber>
    </recommendedName>
    <alternativeName>
        <fullName evidence="1">Aspartyl-tRNA synthetase</fullName>
        <shortName evidence="1">AspRS</shortName>
    </alternativeName>
    <alternativeName>
        <fullName evidence="1">Non-discriminating aspartyl-tRNA synthetase</fullName>
        <shortName evidence="1">ND-AspRS</shortName>
    </alternativeName>
</protein>
<reference key="1">
    <citation type="journal article" date="2006" name="J. Bacteriol.">
        <title>The genome sequence of the obligately chemolithoautotrophic, facultatively anaerobic bacterium Thiobacillus denitrificans.</title>
        <authorList>
            <person name="Beller H.R."/>
            <person name="Chain P.S."/>
            <person name="Letain T.E."/>
            <person name="Chakicherla A."/>
            <person name="Larimer F.W."/>
            <person name="Richardson P.M."/>
            <person name="Coleman M.A."/>
            <person name="Wood A.P."/>
            <person name="Kelly D.P."/>
        </authorList>
    </citation>
    <scope>NUCLEOTIDE SEQUENCE [LARGE SCALE GENOMIC DNA]</scope>
    <source>
        <strain>ATCC 25259 / T1</strain>
    </source>
</reference>
<comment type="function">
    <text evidence="1">Aspartyl-tRNA synthetase with relaxed tRNA specificity since it is able to aspartylate not only its cognate tRNA(Asp) but also tRNA(Asn). Reaction proceeds in two steps: L-aspartate is first activated by ATP to form Asp-AMP and then transferred to the acceptor end of tRNA(Asp/Asn).</text>
</comment>
<comment type="catalytic activity">
    <reaction evidence="1">
        <text>tRNA(Asx) + L-aspartate + ATP = L-aspartyl-tRNA(Asx) + AMP + diphosphate</text>
        <dbReference type="Rhea" id="RHEA:18349"/>
        <dbReference type="Rhea" id="RHEA-COMP:9710"/>
        <dbReference type="Rhea" id="RHEA-COMP:9711"/>
        <dbReference type="ChEBI" id="CHEBI:29991"/>
        <dbReference type="ChEBI" id="CHEBI:30616"/>
        <dbReference type="ChEBI" id="CHEBI:33019"/>
        <dbReference type="ChEBI" id="CHEBI:78442"/>
        <dbReference type="ChEBI" id="CHEBI:78516"/>
        <dbReference type="ChEBI" id="CHEBI:456215"/>
        <dbReference type="EC" id="6.1.1.23"/>
    </reaction>
</comment>
<comment type="subunit">
    <text evidence="1">Homodimer.</text>
</comment>
<comment type="subcellular location">
    <subcellularLocation>
        <location evidence="1">Cytoplasm</location>
    </subcellularLocation>
</comment>
<comment type="similarity">
    <text evidence="1">Belongs to the class-II aminoacyl-tRNA synthetase family. Type 1 subfamily.</text>
</comment>
<sequence length="597" mass="66893">MRTHYCGAVTAADVGNTVTLCGWAHRRRDHGGVIFIDLRDREGMVQVVVDPDTPAAFKLAEDVRAEFVLKIEGKVRPRPAGTENPHLPTGMVEVLTLDLDVLNPSLTPPFQIDDETINENIRLQYRYLDLRREPMQKNLKLRYRVSKIMRDYLDTHGFMEVETPMLTRSTPEGARDYLVPSRVHDGMFYALPQSPQLFKQLLMVSGVDRYFQITKCFRDEDLRADRQPEFTQVDLETSFMGEEAIMGLVEGMIRDMMQKAQGIELPAAFPRMSYAEAMNRYGSDKPDLRVTLEIVDVGDVMRDVAFKVFATPANDPKGRVAALRIPGGATLSRSEIDGYTEFVKIYGAKGLAYIKVNDVGQLNEAGLQSPIVKNLSEAALHAVMERTGAQNGDLIFFGADRAKVVNDALGALRLKIGHEKGHVDGRAWAPLWVVDFPMFEYNEDENRWDALHHPFTAPKDGHEDWLATDPGKCLSKAYDMVLNGWEVGGGSVRIHREKVQEKVFAALNIGEEERREKFGFLLDALQYGAPPHGGLAFGLDRLVTLMAGAESIRDVIAFPKTQRASCLMTNAPNVVDEKQLRELHIRLRNPIAADKAA</sequence>
<accession>Q3SLL2</accession>
<organism>
    <name type="scientific">Thiobacillus denitrificans (strain ATCC 25259 / T1)</name>
    <dbReference type="NCBI Taxonomy" id="292415"/>
    <lineage>
        <taxon>Bacteria</taxon>
        <taxon>Pseudomonadati</taxon>
        <taxon>Pseudomonadota</taxon>
        <taxon>Betaproteobacteria</taxon>
        <taxon>Nitrosomonadales</taxon>
        <taxon>Thiobacillaceae</taxon>
        <taxon>Thiobacillus</taxon>
    </lineage>
</organism>
<dbReference type="EC" id="6.1.1.23" evidence="1"/>
<dbReference type="EMBL" id="CP000116">
    <property type="protein sequence ID" value="AAZ96395.1"/>
    <property type="molecule type" value="Genomic_DNA"/>
</dbReference>
<dbReference type="RefSeq" id="WP_011310954.1">
    <property type="nucleotide sequence ID" value="NC_007404.1"/>
</dbReference>
<dbReference type="SMR" id="Q3SLL2"/>
<dbReference type="STRING" id="292415.Tbd_0442"/>
<dbReference type="KEGG" id="tbd:Tbd_0442"/>
<dbReference type="eggNOG" id="COG0173">
    <property type="taxonomic scope" value="Bacteria"/>
</dbReference>
<dbReference type="HOGENOM" id="CLU_014330_3_2_4"/>
<dbReference type="OrthoDB" id="9802326at2"/>
<dbReference type="Proteomes" id="UP000008291">
    <property type="component" value="Chromosome"/>
</dbReference>
<dbReference type="GO" id="GO:0005737">
    <property type="term" value="C:cytoplasm"/>
    <property type="evidence" value="ECO:0007669"/>
    <property type="project" value="UniProtKB-SubCell"/>
</dbReference>
<dbReference type="GO" id="GO:0004815">
    <property type="term" value="F:aspartate-tRNA ligase activity"/>
    <property type="evidence" value="ECO:0007669"/>
    <property type="project" value="UniProtKB-UniRule"/>
</dbReference>
<dbReference type="GO" id="GO:0050560">
    <property type="term" value="F:aspartate-tRNA(Asn) ligase activity"/>
    <property type="evidence" value="ECO:0007669"/>
    <property type="project" value="UniProtKB-EC"/>
</dbReference>
<dbReference type="GO" id="GO:0005524">
    <property type="term" value="F:ATP binding"/>
    <property type="evidence" value="ECO:0007669"/>
    <property type="project" value="UniProtKB-UniRule"/>
</dbReference>
<dbReference type="GO" id="GO:0003676">
    <property type="term" value="F:nucleic acid binding"/>
    <property type="evidence" value="ECO:0007669"/>
    <property type="project" value="InterPro"/>
</dbReference>
<dbReference type="GO" id="GO:0006422">
    <property type="term" value="P:aspartyl-tRNA aminoacylation"/>
    <property type="evidence" value="ECO:0007669"/>
    <property type="project" value="UniProtKB-UniRule"/>
</dbReference>
<dbReference type="CDD" id="cd00777">
    <property type="entry name" value="AspRS_core"/>
    <property type="match status" value="1"/>
</dbReference>
<dbReference type="CDD" id="cd04317">
    <property type="entry name" value="EcAspRS_like_N"/>
    <property type="match status" value="1"/>
</dbReference>
<dbReference type="Gene3D" id="3.30.930.10">
    <property type="entry name" value="Bira Bifunctional Protein, Domain 2"/>
    <property type="match status" value="1"/>
</dbReference>
<dbReference type="Gene3D" id="3.30.1360.30">
    <property type="entry name" value="GAD-like domain"/>
    <property type="match status" value="1"/>
</dbReference>
<dbReference type="Gene3D" id="2.40.50.140">
    <property type="entry name" value="Nucleic acid-binding proteins"/>
    <property type="match status" value="1"/>
</dbReference>
<dbReference type="HAMAP" id="MF_00044">
    <property type="entry name" value="Asp_tRNA_synth_type1"/>
    <property type="match status" value="1"/>
</dbReference>
<dbReference type="InterPro" id="IPR004364">
    <property type="entry name" value="Aa-tRNA-synt_II"/>
</dbReference>
<dbReference type="InterPro" id="IPR006195">
    <property type="entry name" value="aa-tRNA-synth_II"/>
</dbReference>
<dbReference type="InterPro" id="IPR045864">
    <property type="entry name" value="aa-tRNA-synth_II/BPL/LPL"/>
</dbReference>
<dbReference type="InterPro" id="IPR004524">
    <property type="entry name" value="Asp-tRNA-ligase_1"/>
</dbReference>
<dbReference type="InterPro" id="IPR047089">
    <property type="entry name" value="Asp-tRNA-ligase_1_N"/>
</dbReference>
<dbReference type="InterPro" id="IPR002312">
    <property type="entry name" value="Asp/Asn-tRNA-synth_IIb"/>
</dbReference>
<dbReference type="InterPro" id="IPR047090">
    <property type="entry name" value="AspRS_core"/>
</dbReference>
<dbReference type="InterPro" id="IPR004115">
    <property type="entry name" value="GAD-like_sf"/>
</dbReference>
<dbReference type="InterPro" id="IPR029351">
    <property type="entry name" value="GAD_dom"/>
</dbReference>
<dbReference type="InterPro" id="IPR012340">
    <property type="entry name" value="NA-bd_OB-fold"/>
</dbReference>
<dbReference type="InterPro" id="IPR004365">
    <property type="entry name" value="NA-bd_OB_tRNA"/>
</dbReference>
<dbReference type="NCBIfam" id="TIGR00459">
    <property type="entry name" value="aspS_bact"/>
    <property type="match status" value="1"/>
</dbReference>
<dbReference type="NCBIfam" id="NF001750">
    <property type="entry name" value="PRK00476.1"/>
    <property type="match status" value="1"/>
</dbReference>
<dbReference type="PANTHER" id="PTHR22594:SF5">
    <property type="entry name" value="ASPARTATE--TRNA LIGASE, MITOCHONDRIAL"/>
    <property type="match status" value="1"/>
</dbReference>
<dbReference type="PANTHER" id="PTHR22594">
    <property type="entry name" value="ASPARTYL/LYSYL-TRNA SYNTHETASE"/>
    <property type="match status" value="1"/>
</dbReference>
<dbReference type="Pfam" id="PF02938">
    <property type="entry name" value="GAD"/>
    <property type="match status" value="1"/>
</dbReference>
<dbReference type="Pfam" id="PF00152">
    <property type="entry name" value="tRNA-synt_2"/>
    <property type="match status" value="1"/>
</dbReference>
<dbReference type="Pfam" id="PF01336">
    <property type="entry name" value="tRNA_anti-codon"/>
    <property type="match status" value="1"/>
</dbReference>
<dbReference type="PRINTS" id="PR01042">
    <property type="entry name" value="TRNASYNTHASP"/>
</dbReference>
<dbReference type="SUPFAM" id="SSF55681">
    <property type="entry name" value="Class II aaRS and biotin synthetases"/>
    <property type="match status" value="1"/>
</dbReference>
<dbReference type="SUPFAM" id="SSF55261">
    <property type="entry name" value="GAD domain-like"/>
    <property type="match status" value="1"/>
</dbReference>
<dbReference type="SUPFAM" id="SSF50249">
    <property type="entry name" value="Nucleic acid-binding proteins"/>
    <property type="match status" value="1"/>
</dbReference>
<dbReference type="PROSITE" id="PS50862">
    <property type="entry name" value="AA_TRNA_LIGASE_II"/>
    <property type="match status" value="1"/>
</dbReference>
<feature type="chain" id="PRO_0000235574" description="Aspartate--tRNA(Asp/Asn) ligase">
    <location>
        <begin position="1"/>
        <end position="597"/>
    </location>
</feature>
<feature type="region of interest" description="Aspartate" evidence="1">
    <location>
        <begin position="196"/>
        <end position="199"/>
    </location>
</feature>
<feature type="binding site" evidence="1">
    <location>
        <position position="172"/>
    </location>
    <ligand>
        <name>L-aspartate</name>
        <dbReference type="ChEBI" id="CHEBI:29991"/>
    </ligand>
</feature>
<feature type="binding site" evidence="1">
    <location>
        <begin position="218"/>
        <end position="220"/>
    </location>
    <ligand>
        <name>ATP</name>
        <dbReference type="ChEBI" id="CHEBI:30616"/>
    </ligand>
</feature>
<feature type="binding site" evidence="1">
    <location>
        <position position="218"/>
    </location>
    <ligand>
        <name>L-aspartate</name>
        <dbReference type="ChEBI" id="CHEBI:29991"/>
    </ligand>
</feature>
<feature type="binding site" evidence="1">
    <location>
        <position position="227"/>
    </location>
    <ligand>
        <name>ATP</name>
        <dbReference type="ChEBI" id="CHEBI:30616"/>
    </ligand>
</feature>
<feature type="binding site" evidence="1">
    <location>
        <position position="452"/>
    </location>
    <ligand>
        <name>L-aspartate</name>
        <dbReference type="ChEBI" id="CHEBI:29991"/>
    </ligand>
</feature>
<feature type="binding site" evidence="1">
    <location>
        <position position="486"/>
    </location>
    <ligand>
        <name>ATP</name>
        <dbReference type="ChEBI" id="CHEBI:30616"/>
    </ligand>
</feature>
<feature type="binding site" evidence="1">
    <location>
        <position position="493"/>
    </location>
    <ligand>
        <name>L-aspartate</name>
        <dbReference type="ChEBI" id="CHEBI:29991"/>
    </ligand>
</feature>
<feature type="binding site" evidence="1">
    <location>
        <begin position="538"/>
        <end position="541"/>
    </location>
    <ligand>
        <name>ATP</name>
        <dbReference type="ChEBI" id="CHEBI:30616"/>
    </ligand>
</feature>
<feature type="site" description="Important for tRNA non-discrimination" evidence="1">
    <location>
        <position position="30"/>
    </location>
</feature>
<feature type="site" description="Important for tRNA non-discrimination" evidence="1">
    <location>
        <position position="81"/>
    </location>
</feature>
<keyword id="KW-0030">Aminoacyl-tRNA synthetase</keyword>
<keyword id="KW-0067">ATP-binding</keyword>
<keyword id="KW-0963">Cytoplasm</keyword>
<keyword id="KW-0436">Ligase</keyword>
<keyword id="KW-0547">Nucleotide-binding</keyword>
<keyword id="KW-0648">Protein biosynthesis</keyword>
<keyword id="KW-1185">Reference proteome</keyword>
<name>SYDND_THIDA</name>
<proteinExistence type="inferred from homology"/>
<gene>
    <name evidence="1" type="primary">aspS</name>
    <name type="ordered locus">Tbd_0442</name>
</gene>